<comment type="function">
    <text evidence="2 3">Inhibits angiogenesis in the vitreous humor of the eye, and therefore represses neovascularization (By similarity). Binds collagen fibrils (By similarity). May be involved in collagen fiber organization via regulation of other members of the small leucine-rich repeat proteoglycan superfamily (By similarity).</text>
</comment>
<comment type="subunit">
    <text evidence="2">Homodimer.</text>
</comment>
<comment type="subcellular location">
    <subcellularLocation>
        <location evidence="8">Secreted</location>
        <location evidence="8">Extracellular space</location>
        <location evidence="8">Extracellular matrix</location>
    </subcellularLocation>
</comment>
<comment type="tissue specificity">
    <text evidence="6 8 9 10">Expressed in cartilage and synovial membranes (at protein level) (PubMed:18164633, PubMed:23845380). Expressed in the retina, iris, ligament, skin and fetal liver (at protein level) (PubMed:12019215, PubMed:25136834). Expressed in the retinal pigment epithelium (at protein level) (PubMed:25136834). Expressed in synovial fibroblasts and subchondral bone osteoblasts (PubMed:18164633).</text>
</comment>
<comment type="PTM">
    <text evidence="12">O-glycosylated.</text>
</comment>
<comment type="PTM">
    <text evidence="2 9">Proteolytically cleaved by MMP1, MMP2, MMP3, MMP7, MMP8, MMP9, ADAMTS4, and ADAMTS5 (PubMed:23845380). Proteolytically cleaved by MMP13 (By similarity). The degradation of OPTC by proteases may contribute to osteoarthritis pathophysiology (PubMed:23845380).</text>
</comment>
<comment type="PTM">
    <text evidence="10">Sulfated on tyrosine residues.</text>
</comment>
<comment type="similarity">
    <text evidence="11">Belongs to the small leucine-rich proteoglycan (SLRP) family. SLRP class III subfamily.</text>
</comment>
<accession>Q9UBM4</accession>
<accession>Q5T2G4</accession>
<organism>
    <name type="scientific">Homo sapiens</name>
    <name type="common">Human</name>
    <dbReference type="NCBI Taxonomy" id="9606"/>
    <lineage>
        <taxon>Eukaryota</taxon>
        <taxon>Metazoa</taxon>
        <taxon>Chordata</taxon>
        <taxon>Craniata</taxon>
        <taxon>Vertebrata</taxon>
        <taxon>Euteleostomi</taxon>
        <taxon>Mammalia</taxon>
        <taxon>Eutheria</taxon>
        <taxon>Euarchontoglires</taxon>
        <taxon>Primates</taxon>
        <taxon>Haplorrhini</taxon>
        <taxon>Catarrhini</taxon>
        <taxon>Hominidae</taxon>
        <taxon>Homo</taxon>
    </lineage>
</organism>
<gene>
    <name type="primary">OPTC</name>
    <name type="synonym">OPT</name>
</gene>
<dbReference type="EMBL" id="AJ133790">
    <property type="protein sequence ID" value="CAB53459.1"/>
    <property type="molecule type" value="mRNA"/>
</dbReference>
<dbReference type="EMBL" id="AF161702">
    <property type="protein sequence ID" value="AAD45900.1"/>
    <property type="molecule type" value="mRNA"/>
</dbReference>
<dbReference type="EMBL" id="AY077681">
    <property type="protein sequence ID" value="AAL78286.1"/>
    <property type="molecule type" value="mRNA"/>
</dbReference>
<dbReference type="EMBL" id="AL391817">
    <property type="status" value="NOT_ANNOTATED_CDS"/>
    <property type="molecule type" value="Genomic_DNA"/>
</dbReference>
<dbReference type="EMBL" id="CH471067">
    <property type="protein sequence ID" value="EAW91482.1"/>
    <property type="molecule type" value="Genomic_DNA"/>
</dbReference>
<dbReference type="EMBL" id="BC074942">
    <property type="protein sequence ID" value="AAH74942.1"/>
    <property type="molecule type" value="mRNA"/>
</dbReference>
<dbReference type="EMBL" id="BC074943">
    <property type="protein sequence ID" value="AAH74943.1"/>
    <property type="molecule type" value="mRNA"/>
</dbReference>
<dbReference type="CCDS" id="CCDS1439.1"/>
<dbReference type="RefSeq" id="NP_055174.1">
    <property type="nucleotide sequence ID" value="NM_014359.4"/>
</dbReference>
<dbReference type="RefSeq" id="XP_011507708.1">
    <property type="nucleotide sequence ID" value="XM_011509406.2"/>
</dbReference>
<dbReference type="SMR" id="Q9UBM4"/>
<dbReference type="BioGRID" id="117640">
    <property type="interactions" value="42"/>
</dbReference>
<dbReference type="FunCoup" id="Q9UBM4">
    <property type="interactions" value="16"/>
</dbReference>
<dbReference type="IntAct" id="Q9UBM4">
    <property type="interactions" value="16"/>
</dbReference>
<dbReference type="STRING" id="9606.ENSP00000356191"/>
<dbReference type="GlyCosmos" id="Q9UBM4">
    <property type="glycosylation" value="1 site, No reported glycans"/>
</dbReference>
<dbReference type="GlyGen" id="Q9UBM4">
    <property type="glycosylation" value="2 sites"/>
</dbReference>
<dbReference type="iPTMnet" id="Q9UBM4"/>
<dbReference type="PhosphoSitePlus" id="Q9UBM4"/>
<dbReference type="BioMuta" id="OPTC"/>
<dbReference type="DMDM" id="8928250"/>
<dbReference type="jPOST" id="Q9UBM4"/>
<dbReference type="MassIVE" id="Q9UBM4"/>
<dbReference type="PaxDb" id="9606-ENSP00000356191"/>
<dbReference type="PeptideAtlas" id="Q9UBM4"/>
<dbReference type="ProteomicsDB" id="84008"/>
<dbReference type="Antibodypedia" id="34546">
    <property type="antibodies" value="113 antibodies from 29 providers"/>
</dbReference>
<dbReference type="DNASU" id="26254"/>
<dbReference type="Ensembl" id="ENST00000367222.7">
    <property type="protein sequence ID" value="ENSP00000356191.2"/>
    <property type="gene ID" value="ENSG00000188770.11"/>
</dbReference>
<dbReference type="Ensembl" id="ENST00000715259.1">
    <property type="protein sequence ID" value="ENSP00000520429.1"/>
    <property type="gene ID" value="ENSG00000188770.11"/>
</dbReference>
<dbReference type="GeneID" id="26254"/>
<dbReference type="KEGG" id="hsa:26254"/>
<dbReference type="MANE-Select" id="ENST00000367222.7">
    <property type="protein sequence ID" value="ENSP00000356191.2"/>
    <property type="RefSeq nucleotide sequence ID" value="NM_014359.4"/>
    <property type="RefSeq protein sequence ID" value="NP_055174.1"/>
</dbReference>
<dbReference type="UCSC" id="uc001gzu.2">
    <property type="organism name" value="human"/>
</dbReference>
<dbReference type="AGR" id="HGNC:8158"/>
<dbReference type="CTD" id="26254"/>
<dbReference type="DisGeNET" id="26254"/>
<dbReference type="GeneCards" id="OPTC"/>
<dbReference type="HGNC" id="HGNC:8158">
    <property type="gene designation" value="OPTC"/>
</dbReference>
<dbReference type="HPA" id="ENSG00000188770">
    <property type="expression patterns" value="Not detected"/>
</dbReference>
<dbReference type="MalaCards" id="OPTC"/>
<dbReference type="MIM" id="605127">
    <property type="type" value="gene"/>
</dbReference>
<dbReference type="neXtProt" id="NX_Q9UBM4"/>
<dbReference type="OpenTargets" id="ENSG00000188770"/>
<dbReference type="PharmGKB" id="PA31947"/>
<dbReference type="VEuPathDB" id="HostDB:ENSG00000188770"/>
<dbReference type="eggNOG" id="KOG0619">
    <property type="taxonomic scope" value="Eukaryota"/>
</dbReference>
<dbReference type="GeneTree" id="ENSGT00940000154248"/>
<dbReference type="HOGENOM" id="CLU_067583_2_0_1"/>
<dbReference type="InParanoid" id="Q9UBM4"/>
<dbReference type="OMA" id="EEHKYTR"/>
<dbReference type="OrthoDB" id="676979at2759"/>
<dbReference type="PAN-GO" id="Q9UBM4">
    <property type="GO annotations" value="2 GO annotations based on evolutionary models"/>
</dbReference>
<dbReference type="PhylomeDB" id="Q9UBM4"/>
<dbReference type="TreeFam" id="TF351924"/>
<dbReference type="PathwayCommons" id="Q9UBM4"/>
<dbReference type="Reactome" id="R-HSA-1474228">
    <property type="pathway name" value="Degradation of the extracellular matrix"/>
</dbReference>
<dbReference type="SignaLink" id="Q9UBM4"/>
<dbReference type="BioGRID-ORCS" id="26254">
    <property type="hits" value="12 hits in 1140 CRISPR screens"/>
</dbReference>
<dbReference type="GeneWiki" id="Opticin"/>
<dbReference type="GenomeRNAi" id="26254"/>
<dbReference type="Pharos" id="Q9UBM4">
    <property type="development level" value="Tbio"/>
</dbReference>
<dbReference type="PRO" id="PR:Q9UBM4"/>
<dbReference type="Proteomes" id="UP000005640">
    <property type="component" value="Chromosome 1"/>
</dbReference>
<dbReference type="RNAct" id="Q9UBM4">
    <property type="molecule type" value="protein"/>
</dbReference>
<dbReference type="Bgee" id="ENSG00000188770">
    <property type="expression patterns" value="Expressed in tibialis anterior and 82 other cell types or tissues"/>
</dbReference>
<dbReference type="ExpressionAtlas" id="Q9UBM4">
    <property type="expression patterns" value="baseline and differential"/>
</dbReference>
<dbReference type="GO" id="GO:0031012">
    <property type="term" value="C:extracellular matrix"/>
    <property type="evidence" value="ECO:0000314"/>
    <property type="project" value="UniProtKB"/>
</dbReference>
<dbReference type="GO" id="GO:0005576">
    <property type="term" value="C:extracellular region"/>
    <property type="evidence" value="ECO:0000304"/>
    <property type="project" value="Reactome"/>
</dbReference>
<dbReference type="GO" id="GO:0005201">
    <property type="term" value="F:extracellular matrix structural constituent"/>
    <property type="evidence" value="ECO:0000304"/>
    <property type="project" value="ProtInc"/>
</dbReference>
<dbReference type="GO" id="GO:0001525">
    <property type="term" value="P:angiogenesis"/>
    <property type="evidence" value="ECO:0007669"/>
    <property type="project" value="Ensembl"/>
</dbReference>
<dbReference type="GO" id="GO:0061975">
    <property type="term" value="P:articular cartilage development"/>
    <property type="evidence" value="ECO:0000318"/>
    <property type="project" value="GO_Central"/>
</dbReference>
<dbReference type="GO" id="GO:0060348">
    <property type="term" value="P:bone development"/>
    <property type="evidence" value="ECO:0000318"/>
    <property type="project" value="GO_Central"/>
</dbReference>
<dbReference type="GO" id="GO:0030199">
    <property type="term" value="P:collagen fibril organization"/>
    <property type="evidence" value="ECO:0000250"/>
    <property type="project" value="UniProtKB"/>
</dbReference>
<dbReference type="GO" id="GO:0016525">
    <property type="term" value="P:negative regulation of angiogenesis"/>
    <property type="evidence" value="ECO:0007669"/>
    <property type="project" value="Ensembl"/>
</dbReference>
<dbReference type="FunFam" id="3.80.10.10:FF:000167">
    <property type="entry name" value="epiphycan"/>
    <property type="match status" value="1"/>
</dbReference>
<dbReference type="Gene3D" id="3.80.10.10">
    <property type="entry name" value="Ribonuclease Inhibitor"/>
    <property type="match status" value="1"/>
</dbReference>
<dbReference type="InterPro" id="IPR001611">
    <property type="entry name" value="Leu-rich_rpt"/>
</dbReference>
<dbReference type="InterPro" id="IPR003591">
    <property type="entry name" value="Leu-rich_rpt_typical-subtyp"/>
</dbReference>
<dbReference type="InterPro" id="IPR032675">
    <property type="entry name" value="LRR_dom_sf"/>
</dbReference>
<dbReference type="InterPro" id="IPR043547">
    <property type="entry name" value="Mimecan/Epiphycan/Opticin"/>
</dbReference>
<dbReference type="PANTHER" id="PTHR46269">
    <property type="entry name" value="EPIPHYCAN-RELATED"/>
    <property type="match status" value="1"/>
</dbReference>
<dbReference type="PANTHER" id="PTHR46269:SF4">
    <property type="entry name" value="OPTICIN"/>
    <property type="match status" value="1"/>
</dbReference>
<dbReference type="Pfam" id="PF13855">
    <property type="entry name" value="LRR_8"/>
    <property type="match status" value="1"/>
</dbReference>
<dbReference type="SMART" id="SM00369">
    <property type="entry name" value="LRR_TYP"/>
    <property type="match status" value="4"/>
</dbReference>
<dbReference type="SUPFAM" id="SSF52058">
    <property type="entry name" value="L domain-like"/>
    <property type="match status" value="1"/>
</dbReference>
<dbReference type="PROSITE" id="PS51450">
    <property type="entry name" value="LRR"/>
    <property type="match status" value="4"/>
</dbReference>
<protein>
    <recommendedName>
        <fullName>Opticin</fullName>
    </recommendedName>
    <alternativeName>
        <fullName>Oculoglycan</fullName>
    </alternativeName>
</protein>
<keyword id="KW-1015">Disulfide bond</keyword>
<keyword id="KW-0272">Extracellular matrix</keyword>
<keyword id="KW-0325">Glycoprotein</keyword>
<keyword id="KW-0433">Leucine-rich repeat</keyword>
<keyword id="KW-1267">Proteomics identification</keyword>
<keyword id="KW-1185">Reference proteome</keyword>
<keyword id="KW-0677">Repeat</keyword>
<keyword id="KW-0964">Secreted</keyword>
<keyword id="KW-0732">Signal</keyword>
<keyword id="KW-0765">Sulfation</keyword>
<sequence>MRLLAFLSLLALVLQETGTASLPRKERKRREEQMPREGDSFEVLPLRNDVLNPDNYGEVIDLSNYEELTDYGDQLPEVKVTSLAPATSISPAKSTTAPGTPSSNPTMTRPTTAGLLLSSQPNHGLPTCLVCVCLGSSVYCDDIDLEDIPPLPRRTAYLYARFNRISRIRAEDFKGLTKLKRIDLSNNLISSIDNDAFRLLHALQDLILPENQLEALPVLPSGIEFLDVRLNRLQSSGIQPAAFRAMEKLQFLYLSDNLLDSIPGPLPLSLRSVHLQNNLIETMQRDVFCDPEEHKHTRRQLEDIRLDGNPINLSLFPSAYFCLPRLPIGRFT</sequence>
<name>OPT_HUMAN</name>
<evidence type="ECO:0000250" key="1"/>
<evidence type="ECO:0000250" key="2">
    <source>
        <dbReference type="UniProtKB" id="P58874"/>
    </source>
</evidence>
<evidence type="ECO:0000250" key="3">
    <source>
        <dbReference type="UniProtKB" id="Q920A0"/>
    </source>
</evidence>
<evidence type="ECO:0000255" key="4"/>
<evidence type="ECO:0000256" key="5">
    <source>
        <dbReference type="SAM" id="MobiDB-lite"/>
    </source>
</evidence>
<evidence type="ECO:0000269" key="6">
    <source>
    </source>
</evidence>
<evidence type="ECO:0000269" key="7">
    <source>
    </source>
</evidence>
<evidence type="ECO:0000269" key="8">
    <source>
    </source>
</evidence>
<evidence type="ECO:0000269" key="9">
    <source>
    </source>
</evidence>
<evidence type="ECO:0000269" key="10">
    <source>
    </source>
</evidence>
<evidence type="ECO:0000305" key="11"/>
<evidence type="ECO:0000305" key="12">
    <source>
    </source>
</evidence>
<proteinExistence type="evidence at protein level"/>
<feature type="signal peptide" evidence="1">
    <location>
        <begin position="1"/>
        <end position="19"/>
    </location>
</feature>
<feature type="chain" id="PRO_0000032765" description="Opticin">
    <location>
        <begin position="20"/>
        <end position="332"/>
    </location>
</feature>
<feature type="domain" description="LRRNT">
    <location>
        <begin position="116"/>
        <end position="153"/>
    </location>
</feature>
<feature type="repeat" description="LRR 1">
    <location>
        <begin position="154"/>
        <end position="175"/>
    </location>
</feature>
<feature type="repeat" description="LRR 2">
    <location>
        <begin position="178"/>
        <end position="199"/>
    </location>
</feature>
<feature type="repeat" description="LRR 3">
    <location>
        <begin position="202"/>
        <end position="223"/>
    </location>
</feature>
<feature type="repeat" description="LRR 4">
    <location>
        <begin position="248"/>
        <end position="269"/>
    </location>
</feature>
<feature type="repeat" description="LRR 5">
    <location>
        <begin position="270"/>
        <end position="290"/>
    </location>
</feature>
<feature type="repeat" description="LRR 6">
    <location>
        <begin position="300"/>
        <end position="320"/>
    </location>
</feature>
<feature type="region of interest" description="Disordered" evidence="5">
    <location>
        <begin position="21"/>
        <end position="41"/>
    </location>
</feature>
<feature type="region of interest" description="Disordered" evidence="5">
    <location>
        <begin position="86"/>
        <end position="106"/>
    </location>
</feature>
<feature type="compositionally biased region" description="Basic and acidic residues" evidence="5">
    <location>
        <begin position="29"/>
        <end position="39"/>
    </location>
</feature>
<feature type="site" description="Cleavage; by MMP7" evidence="9">
    <location>
        <begin position="20"/>
        <end position="21"/>
    </location>
</feature>
<feature type="site" description="Cleavage; by MMP7" evidence="9">
    <location>
        <begin position="32"/>
        <end position="33"/>
    </location>
</feature>
<feature type="site" description="Cleavage; by MMP2" evidence="9">
    <location>
        <begin position="87"/>
        <end position="88"/>
    </location>
</feature>
<feature type="site" description="Cleavage; by MMP13" evidence="2">
    <location>
        <begin position="114"/>
        <end position="115"/>
    </location>
</feature>
<feature type="modified residue" description="Sulfotyrosine" evidence="4">
    <location>
        <position position="65"/>
    </location>
</feature>
<feature type="modified residue" description="Sulfotyrosine" evidence="4">
    <location>
        <position position="71"/>
    </location>
</feature>
<feature type="modified residue" description="Sulfotyrosine" evidence="4">
    <location>
        <position position="139"/>
    </location>
</feature>
<feature type="glycosylation site" description="N-linked (GlcNAc...) asparagine" evidence="7">
    <location>
        <position position="312"/>
    </location>
</feature>
<feature type="disulfide bond" evidence="1">
    <location>
        <begin position="289"/>
        <end position="322"/>
    </location>
</feature>
<feature type="sequence variant" id="VAR_055228" description="In dbSNP:rs139024490." evidence="6">
    <original>I</original>
    <variation>T</variation>
    <location>
        <position position="182"/>
    </location>
</feature>
<feature type="sequence variant" id="VAR_055229" description="In dbSNP:rs150633473." evidence="6">
    <original>R</original>
    <variation>C</variation>
    <location>
        <position position="229"/>
    </location>
</feature>
<feature type="sequence variant" id="VAR_055230" description="In dbSNP:rs56219555." evidence="6">
    <original>R</original>
    <variation>W</variation>
    <location>
        <position position="325"/>
    </location>
</feature>
<reference key="1">
    <citation type="journal article" date="2000" name="J. Biol. Chem.">
        <title>Identification in vitreous and molecular cloning of opticin, a novel member of the family of leucine-rich repeat proteins of the extracellular matrix.</title>
        <authorList>
            <person name="Reardon A.J."/>
            <person name="Le Goff M."/>
            <person name="Briggs M.D."/>
            <person name="McLeod D."/>
            <person name="Sheehan J.K."/>
            <person name="Thornton D.J."/>
            <person name="Bishop P.N."/>
        </authorList>
    </citation>
    <scope>NUCLEOTIDE SEQUENCE [MRNA]</scope>
    <source>
        <tissue>Retina</tissue>
    </source>
</reference>
<reference key="2">
    <citation type="journal article" date="2000" name="Mol. Vis.">
        <title>Cloning, modeling, and chromosomal localization for a small leucine-rich repeat proteoglycan (SLRP) family member expressed in human eye.</title>
        <authorList>
            <person name="Hobby P."/>
            <person name="Wyatt M.K."/>
            <person name="Gan W."/>
            <person name="Bernstein S."/>
            <person name="Tomarev S."/>
            <person name="Slingsby C."/>
            <person name="Wistow G.J."/>
        </authorList>
    </citation>
    <scope>NUCLEOTIDE SEQUENCE [MRNA]</scope>
    <source>
        <tissue>Retina</tissue>
    </source>
</reference>
<reference key="3">
    <citation type="journal article" date="2000" name="Invest. Ophthalmol. Vis. Sci.">
        <title>Isolation of a novel iris-specific and leucine-rich repeat protein (oculoglycan) using differential selection.</title>
        <authorList>
            <person name="Friedman J.S."/>
            <person name="Ducharme R."/>
            <person name="Raymond V."/>
            <person name="Walter M.A."/>
        </authorList>
    </citation>
    <scope>NUCLEOTIDE SEQUENCE [MRNA]</scope>
</reference>
<reference key="4">
    <citation type="journal article" date="2002" name="Hum. Mol. Genet.">
        <title>Protein localization in the human eye and genetic screen of opticin.</title>
        <authorList>
            <person name="Friedman J.S."/>
            <person name="Faucher M."/>
            <person name="Hiscott P."/>
            <person name="Biron V.L."/>
            <person name="Malenfant M."/>
            <person name="Turcotte P."/>
            <person name="Raymond V."/>
            <person name="Walter M.A."/>
        </authorList>
    </citation>
    <scope>NUCLEOTIDE SEQUENCE [MRNA]</scope>
    <scope>VARIANTS THR-182; CYS-229 AND TRP-325</scope>
    <scope>TISSUE SPECIFICITY</scope>
</reference>
<reference key="5">
    <citation type="journal article" date="2006" name="Nature">
        <title>The DNA sequence and biological annotation of human chromosome 1.</title>
        <authorList>
            <person name="Gregory S.G."/>
            <person name="Barlow K.F."/>
            <person name="McLay K.E."/>
            <person name="Kaul R."/>
            <person name="Swarbreck D."/>
            <person name="Dunham A."/>
            <person name="Scott C.E."/>
            <person name="Howe K.L."/>
            <person name="Woodfine K."/>
            <person name="Spencer C.C.A."/>
            <person name="Jones M.C."/>
            <person name="Gillson C."/>
            <person name="Searle S."/>
            <person name="Zhou Y."/>
            <person name="Kokocinski F."/>
            <person name="McDonald L."/>
            <person name="Evans R."/>
            <person name="Phillips K."/>
            <person name="Atkinson A."/>
            <person name="Cooper R."/>
            <person name="Jones C."/>
            <person name="Hall R.E."/>
            <person name="Andrews T.D."/>
            <person name="Lloyd C."/>
            <person name="Ainscough R."/>
            <person name="Almeida J.P."/>
            <person name="Ambrose K.D."/>
            <person name="Anderson F."/>
            <person name="Andrew R.W."/>
            <person name="Ashwell R.I.S."/>
            <person name="Aubin K."/>
            <person name="Babbage A.K."/>
            <person name="Bagguley C.L."/>
            <person name="Bailey J."/>
            <person name="Beasley H."/>
            <person name="Bethel G."/>
            <person name="Bird C.P."/>
            <person name="Bray-Allen S."/>
            <person name="Brown J.Y."/>
            <person name="Brown A.J."/>
            <person name="Buckley D."/>
            <person name="Burton J."/>
            <person name="Bye J."/>
            <person name="Carder C."/>
            <person name="Chapman J.C."/>
            <person name="Clark S.Y."/>
            <person name="Clarke G."/>
            <person name="Clee C."/>
            <person name="Cobley V."/>
            <person name="Collier R.E."/>
            <person name="Corby N."/>
            <person name="Coville G.J."/>
            <person name="Davies J."/>
            <person name="Deadman R."/>
            <person name="Dunn M."/>
            <person name="Earthrowl M."/>
            <person name="Ellington A.G."/>
            <person name="Errington H."/>
            <person name="Frankish A."/>
            <person name="Frankland J."/>
            <person name="French L."/>
            <person name="Garner P."/>
            <person name="Garnett J."/>
            <person name="Gay L."/>
            <person name="Ghori M.R.J."/>
            <person name="Gibson R."/>
            <person name="Gilby L.M."/>
            <person name="Gillett W."/>
            <person name="Glithero R.J."/>
            <person name="Grafham D.V."/>
            <person name="Griffiths C."/>
            <person name="Griffiths-Jones S."/>
            <person name="Grocock R."/>
            <person name="Hammond S."/>
            <person name="Harrison E.S.I."/>
            <person name="Hart E."/>
            <person name="Haugen E."/>
            <person name="Heath P.D."/>
            <person name="Holmes S."/>
            <person name="Holt K."/>
            <person name="Howden P.J."/>
            <person name="Hunt A.R."/>
            <person name="Hunt S.E."/>
            <person name="Hunter G."/>
            <person name="Isherwood J."/>
            <person name="James R."/>
            <person name="Johnson C."/>
            <person name="Johnson D."/>
            <person name="Joy A."/>
            <person name="Kay M."/>
            <person name="Kershaw J.K."/>
            <person name="Kibukawa M."/>
            <person name="Kimberley A.M."/>
            <person name="King A."/>
            <person name="Knights A.J."/>
            <person name="Lad H."/>
            <person name="Laird G."/>
            <person name="Lawlor S."/>
            <person name="Leongamornlert D.A."/>
            <person name="Lloyd D.M."/>
            <person name="Loveland J."/>
            <person name="Lovell J."/>
            <person name="Lush M.J."/>
            <person name="Lyne R."/>
            <person name="Martin S."/>
            <person name="Mashreghi-Mohammadi M."/>
            <person name="Matthews L."/>
            <person name="Matthews N.S.W."/>
            <person name="McLaren S."/>
            <person name="Milne S."/>
            <person name="Mistry S."/>
            <person name="Moore M.J.F."/>
            <person name="Nickerson T."/>
            <person name="O'Dell C.N."/>
            <person name="Oliver K."/>
            <person name="Palmeiri A."/>
            <person name="Palmer S.A."/>
            <person name="Parker A."/>
            <person name="Patel D."/>
            <person name="Pearce A.V."/>
            <person name="Peck A.I."/>
            <person name="Pelan S."/>
            <person name="Phelps K."/>
            <person name="Phillimore B.J."/>
            <person name="Plumb R."/>
            <person name="Rajan J."/>
            <person name="Raymond C."/>
            <person name="Rouse G."/>
            <person name="Saenphimmachak C."/>
            <person name="Sehra H.K."/>
            <person name="Sheridan E."/>
            <person name="Shownkeen R."/>
            <person name="Sims S."/>
            <person name="Skuce C.D."/>
            <person name="Smith M."/>
            <person name="Steward C."/>
            <person name="Subramanian S."/>
            <person name="Sycamore N."/>
            <person name="Tracey A."/>
            <person name="Tromans A."/>
            <person name="Van Helmond Z."/>
            <person name="Wall M."/>
            <person name="Wallis J.M."/>
            <person name="White S."/>
            <person name="Whitehead S.L."/>
            <person name="Wilkinson J.E."/>
            <person name="Willey D.L."/>
            <person name="Williams H."/>
            <person name="Wilming L."/>
            <person name="Wray P.W."/>
            <person name="Wu Z."/>
            <person name="Coulson A."/>
            <person name="Vaudin M."/>
            <person name="Sulston J.E."/>
            <person name="Durbin R.M."/>
            <person name="Hubbard T."/>
            <person name="Wooster R."/>
            <person name="Dunham I."/>
            <person name="Carter N.P."/>
            <person name="McVean G."/>
            <person name="Ross M.T."/>
            <person name="Harrow J."/>
            <person name="Olson M.V."/>
            <person name="Beck S."/>
            <person name="Rogers J."/>
            <person name="Bentley D.R."/>
        </authorList>
    </citation>
    <scope>NUCLEOTIDE SEQUENCE [LARGE SCALE GENOMIC DNA]</scope>
</reference>
<reference key="6">
    <citation type="submission" date="2005-07" db="EMBL/GenBank/DDBJ databases">
        <authorList>
            <person name="Mural R.J."/>
            <person name="Istrail S."/>
            <person name="Sutton G.G."/>
            <person name="Florea L."/>
            <person name="Halpern A.L."/>
            <person name="Mobarry C.M."/>
            <person name="Lippert R."/>
            <person name="Walenz B."/>
            <person name="Shatkay H."/>
            <person name="Dew I."/>
            <person name="Miller J.R."/>
            <person name="Flanigan M.J."/>
            <person name="Edwards N.J."/>
            <person name="Bolanos R."/>
            <person name="Fasulo D."/>
            <person name="Halldorsson B.V."/>
            <person name="Hannenhalli S."/>
            <person name="Turner R."/>
            <person name="Yooseph S."/>
            <person name="Lu F."/>
            <person name="Nusskern D.R."/>
            <person name="Shue B.C."/>
            <person name="Zheng X.H."/>
            <person name="Zhong F."/>
            <person name="Delcher A.L."/>
            <person name="Huson D.H."/>
            <person name="Kravitz S.A."/>
            <person name="Mouchard L."/>
            <person name="Reinert K."/>
            <person name="Remington K.A."/>
            <person name="Clark A.G."/>
            <person name="Waterman M.S."/>
            <person name="Eichler E.E."/>
            <person name="Adams M.D."/>
            <person name="Hunkapiller M.W."/>
            <person name="Myers E.W."/>
            <person name="Venter J.C."/>
        </authorList>
    </citation>
    <scope>NUCLEOTIDE SEQUENCE [LARGE SCALE GENOMIC DNA]</scope>
</reference>
<reference key="7">
    <citation type="journal article" date="2004" name="Genome Res.">
        <title>The status, quality, and expansion of the NIH full-length cDNA project: the Mammalian Gene Collection (MGC).</title>
        <authorList>
            <consortium name="The MGC Project Team"/>
        </authorList>
    </citation>
    <scope>NUCLEOTIDE SEQUENCE [LARGE SCALE MRNA]</scope>
</reference>
<reference key="8">
    <citation type="journal article" date="2005" name="J. Proteome Res.">
        <title>Human plasma N-glycoproteome analysis by immunoaffinity subtraction, hydrazide chemistry, and mass spectrometry.</title>
        <authorList>
            <person name="Liu T."/>
            <person name="Qian W.-J."/>
            <person name="Gritsenko M.A."/>
            <person name="Camp D.G. II"/>
            <person name="Monroe M.E."/>
            <person name="Moore R.J."/>
            <person name="Smith R.D."/>
        </authorList>
    </citation>
    <scope>GLYCOSYLATION [LARGE SCALE ANALYSIS] AT ASN-312</scope>
    <source>
        <tissue>Plasma</tissue>
    </source>
</reference>
<reference key="9">
    <citation type="journal article" date="2008" name="Osteoarthritis Cartilage">
        <title>Identification of opticin, a member of the small leucine-rich repeat proteoglycan family, in human articular tissues: a novel target for MMP-13 in osteoarthritis.</title>
        <authorList>
            <person name="Monfort J."/>
            <person name="Tardif G."/>
            <person name="Roughley P."/>
            <person name="Reboul P."/>
            <person name="Boileau C."/>
            <person name="Bishop P.N."/>
            <person name="Pelletier J.P."/>
            <person name="Martel-Pelletier J."/>
        </authorList>
    </citation>
    <scope>SUBCELLULAR LOCATION</scope>
    <scope>TISSUE SPECIFICITY</scope>
</reference>
<reference key="10">
    <citation type="journal article" date="2014" name="Joint Bone Spine">
        <title>Characterization of opticin digestion by proteases involved in osteoarthritis development.</title>
        <authorList>
            <person name="Tio L."/>
            <person name="Martel-Pelletier J."/>
            <person name="Pelletier J.P."/>
            <person name="Bishop P.N."/>
            <person name="Roughley P."/>
            <person name="Farran A."/>
            <person name="Benito P."/>
            <person name="Monfort J."/>
        </authorList>
    </citation>
    <scope>TISSUE SPECIFICITY</scope>
    <scope>CLEAVAGE BY MMP1; MMP2; MMP3; MMP7; MMP8; MMP9; ADAMTS4 AND ADAMTS5</scope>
</reference>
<reference key="11">
    <citation type="journal article" date="2014" name="PLoS ONE">
        <title>Complement factor H, vitronectin, and opticin are tyrosine-sulfated proteins of the retinal pigment epithelium.</title>
        <authorList>
            <person name="Kanan Y."/>
            <person name="Siefert J.C."/>
            <person name="Kinter M."/>
            <person name="Al-Ubaidi M.R."/>
        </authorList>
    </citation>
    <scope>SULFATION</scope>
    <scope>TISSUE SPECIFICITY</scope>
</reference>